<name>RS7_ANAMM</name>
<keyword id="KW-0687">Ribonucleoprotein</keyword>
<keyword id="KW-0689">Ribosomal protein</keyword>
<keyword id="KW-0694">RNA-binding</keyword>
<keyword id="KW-0699">rRNA-binding</keyword>
<keyword id="KW-0820">tRNA-binding</keyword>
<gene>
    <name evidence="1" type="primary">rpsG</name>
    <name type="ordered locus">AM250</name>
</gene>
<proteinExistence type="inferred from homology"/>
<sequence>MSRRRRVSRRPVVSDGGPGGVLLARFINVVMSRGKKALAERIVSGALKMAESKSTGETGVSIFNTAVSNVMPRMEVRSRRVGGVTYQIPVEVREDRSTSLALRWIVKAARTNRKRTNKTYMSCLCNELLEAYNKRGSACKMKEEKFRMAEANKAFSHFRF</sequence>
<protein>
    <recommendedName>
        <fullName evidence="1">Small ribosomal subunit protein uS7</fullName>
    </recommendedName>
    <alternativeName>
        <fullName evidence="2">30S ribosomal protein S7</fullName>
    </alternativeName>
</protein>
<organism>
    <name type="scientific">Anaplasma marginale (strain St. Maries)</name>
    <dbReference type="NCBI Taxonomy" id="234826"/>
    <lineage>
        <taxon>Bacteria</taxon>
        <taxon>Pseudomonadati</taxon>
        <taxon>Pseudomonadota</taxon>
        <taxon>Alphaproteobacteria</taxon>
        <taxon>Rickettsiales</taxon>
        <taxon>Anaplasmataceae</taxon>
        <taxon>Anaplasma</taxon>
    </lineage>
</organism>
<evidence type="ECO:0000255" key="1">
    <source>
        <dbReference type="HAMAP-Rule" id="MF_00480"/>
    </source>
</evidence>
<evidence type="ECO:0000305" key="2"/>
<feature type="chain" id="PRO_0000226480" description="Small ribosomal subunit protein uS7">
    <location>
        <begin position="1"/>
        <end position="160"/>
    </location>
</feature>
<dbReference type="EMBL" id="CP000030">
    <property type="protein sequence ID" value="AAV86356.1"/>
    <property type="molecule type" value="Genomic_DNA"/>
</dbReference>
<dbReference type="RefSeq" id="WP_010267168.1">
    <property type="nucleotide sequence ID" value="NZ_AFMU01000015.1"/>
</dbReference>
<dbReference type="SMR" id="Q5PBH3"/>
<dbReference type="GeneID" id="7398639"/>
<dbReference type="KEGG" id="ama:AM250"/>
<dbReference type="PATRIC" id="fig|320483.3.peg.212"/>
<dbReference type="HOGENOM" id="CLU_072226_1_1_5"/>
<dbReference type="GO" id="GO:0015935">
    <property type="term" value="C:small ribosomal subunit"/>
    <property type="evidence" value="ECO:0007669"/>
    <property type="project" value="InterPro"/>
</dbReference>
<dbReference type="GO" id="GO:0019843">
    <property type="term" value="F:rRNA binding"/>
    <property type="evidence" value="ECO:0007669"/>
    <property type="project" value="UniProtKB-UniRule"/>
</dbReference>
<dbReference type="GO" id="GO:0003735">
    <property type="term" value="F:structural constituent of ribosome"/>
    <property type="evidence" value="ECO:0007669"/>
    <property type="project" value="InterPro"/>
</dbReference>
<dbReference type="GO" id="GO:0000049">
    <property type="term" value="F:tRNA binding"/>
    <property type="evidence" value="ECO:0007669"/>
    <property type="project" value="UniProtKB-UniRule"/>
</dbReference>
<dbReference type="GO" id="GO:0006412">
    <property type="term" value="P:translation"/>
    <property type="evidence" value="ECO:0007669"/>
    <property type="project" value="UniProtKB-UniRule"/>
</dbReference>
<dbReference type="CDD" id="cd14869">
    <property type="entry name" value="uS7_Bacteria"/>
    <property type="match status" value="1"/>
</dbReference>
<dbReference type="Gene3D" id="1.10.455.10">
    <property type="entry name" value="Ribosomal protein S7 domain"/>
    <property type="match status" value="1"/>
</dbReference>
<dbReference type="HAMAP" id="MF_00480_B">
    <property type="entry name" value="Ribosomal_uS7_B"/>
    <property type="match status" value="1"/>
</dbReference>
<dbReference type="InterPro" id="IPR000235">
    <property type="entry name" value="Ribosomal_uS7"/>
</dbReference>
<dbReference type="InterPro" id="IPR005717">
    <property type="entry name" value="Ribosomal_uS7_bac/org-type"/>
</dbReference>
<dbReference type="InterPro" id="IPR023798">
    <property type="entry name" value="Ribosomal_uS7_dom"/>
</dbReference>
<dbReference type="InterPro" id="IPR036823">
    <property type="entry name" value="Ribosomal_uS7_dom_sf"/>
</dbReference>
<dbReference type="NCBIfam" id="TIGR01029">
    <property type="entry name" value="rpsG_bact"/>
    <property type="match status" value="1"/>
</dbReference>
<dbReference type="PANTHER" id="PTHR11205">
    <property type="entry name" value="RIBOSOMAL PROTEIN S7"/>
    <property type="match status" value="1"/>
</dbReference>
<dbReference type="Pfam" id="PF00177">
    <property type="entry name" value="Ribosomal_S7"/>
    <property type="match status" value="1"/>
</dbReference>
<dbReference type="PIRSF" id="PIRSF002122">
    <property type="entry name" value="RPS7p_RPS7a_RPS5e_RPS7o"/>
    <property type="match status" value="1"/>
</dbReference>
<dbReference type="SUPFAM" id="SSF47973">
    <property type="entry name" value="Ribosomal protein S7"/>
    <property type="match status" value="1"/>
</dbReference>
<comment type="function">
    <text evidence="1">One of the primary rRNA binding proteins, it binds directly to 16S rRNA where it nucleates assembly of the head domain of the 30S subunit. Is located at the subunit interface close to the decoding center, probably blocks exit of the E-site tRNA.</text>
</comment>
<comment type="subunit">
    <text evidence="1">Part of the 30S ribosomal subunit. Contacts proteins S9 and S11.</text>
</comment>
<comment type="similarity">
    <text evidence="1">Belongs to the universal ribosomal protein uS7 family.</text>
</comment>
<accession>Q5PBH3</accession>
<reference key="1">
    <citation type="journal article" date="2005" name="Proc. Natl. Acad. Sci. U.S.A.">
        <title>Complete genome sequencing of Anaplasma marginale reveals that the surface is skewed to two superfamilies of outer membrane proteins.</title>
        <authorList>
            <person name="Brayton K.A."/>
            <person name="Kappmeyer L.S."/>
            <person name="Herndon D.R."/>
            <person name="Dark M.J."/>
            <person name="Tibbals D.L."/>
            <person name="Palmer G.H."/>
            <person name="McGuire T.C."/>
            <person name="Knowles D.P. Jr."/>
        </authorList>
    </citation>
    <scope>NUCLEOTIDE SEQUENCE [LARGE SCALE GENOMIC DNA]</scope>
    <source>
        <strain>St. Maries</strain>
    </source>
</reference>